<accession>A0A7U3TCA2</accession>
<comment type="function">
    <text evidence="1 2">Catalyzes the hydrolysis of dATP, dADP and dAMP into dA (PubMed:33893297, PubMed:33926954). This step is essential for Z-genome synthesis (containing aminoadenine instead of adenine). Specifically removes dATP and its precursor dADP from the nucleotide pool of the host, preventing the incorporation of A into the phage genome and favoring the integration of the Z-base into the viral genome (PubMed:33893297, PubMed:33926954).</text>
</comment>
<comment type="catalytic activity">
    <reaction evidence="1 2">
        <text>dATP + H2O = 2'-deoxyadenosine + triphosphate + H(+)</text>
        <dbReference type="Rhea" id="RHEA:67648"/>
        <dbReference type="ChEBI" id="CHEBI:15377"/>
        <dbReference type="ChEBI" id="CHEBI:15378"/>
        <dbReference type="ChEBI" id="CHEBI:17256"/>
        <dbReference type="ChEBI" id="CHEBI:18036"/>
        <dbReference type="ChEBI" id="CHEBI:61404"/>
    </reaction>
</comment>
<comment type="catalytic activity">
    <reaction evidence="1 2">
        <text>dADP + H2O = 2'-deoxyadenosine + diphosphate</text>
        <dbReference type="Rhea" id="RHEA:67652"/>
        <dbReference type="ChEBI" id="CHEBI:15377"/>
        <dbReference type="ChEBI" id="CHEBI:17256"/>
        <dbReference type="ChEBI" id="CHEBI:33019"/>
        <dbReference type="ChEBI" id="CHEBI:57667"/>
    </reaction>
</comment>
<comment type="catalytic activity">
    <reaction evidence="1 2">
        <text>dAMP + H2O = 2'-deoxyadenosine + phosphate</text>
        <dbReference type="Rhea" id="RHEA:29371"/>
        <dbReference type="ChEBI" id="CHEBI:15377"/>
        <dbReference type="ChEBI" id="CHEBI:17256"/>
        <dbReference type="ChEBI" id="CHEBI:43474"/>
        <dbReference type="ChEBI" id="CHEBI:58245"/>
    </reaction>
</comment>
<comment type="cofactor">
    <cofactor evidence="1 2">
        <name>Co(2+)</name>
        <dbReference type="ChEBI" id="CHEBI:48828"/>
    </cofactor>
    <cofactor evidence="1">
        <name>Zn(2+)</name>
        <dbReference type="ChEBI" id="CHEBI:29105"/>
    </cofactor>
    <text evidence="1">Uses a typical 2 metal-ion mechanism to dephosphorylate dATP (PubMed:33893297). Zn(2+) in the first binding site is replaced by Co(2+) in excess of the latter (PubMed:33893297).</text>
</comment>
<comment type="subunit">
    <text evidence="1">Homohexamer.</text>
</comment>
<comment type="similarity">
    <text evidence="5">Belongs to the Caudovirales dATP triphosphohydrolase family.</text>
</comment>
<name>DATPH_BPS2L</name>
<protein>
    <recommendedName>
        <fullName evidence="3 4">dATP triphosphohydrolase</fullName>
        <shortName evidence="4">dATPase</shortName>
    </recommendedName>
    <alternativeName>
        <fullName evidence="3">DatZ</fullName>
    </alternativeName>
</protein>
<dbReference type="EMBL" id="MW334946">
    <property type="protein sequence ID" value="QQG31317.1"/>
    <property type="molecule type" value="Genomic_DNA"/>
</dbReference>
<dbReference type="SMR" id="A0A7U3TCA2"/>
<dbReference type="KEGG" id="ag:QQG31317"/>
<dbReference type="Proteomes" id="UP000595790">
    <property type="component" value="Genome"/>
</dbReference>
<dbReference type="GO" id="GO:0016787">
    <property type="term" value="F:hydrolase activity"/>
    <property type="evidence" value="ECO:0000314"/>
    <property type="project" value="UniProtKB"/>
</dbReference>
<dbReference type="GO" id="GO:0046872">
    <property type="term" value="F:metal ion binding"/>
    <property type="evidence" value="ECO:0007669"/>
    <property type="project" value="UniProtKB-KW"/>
</dbReference>
<dbReference type="GO" id="GO:0000166">
    <property type="term" value="F:nucleotide binding"/>
    <property type="evidence" value="ECO:0007669"/>
    <property type="project" value="UniProtKB-KW"/>
</dbReference>
<dbReference type="Gene3D" id="1.10.3210.10">
    <property type="entry name" value="Hypothetical protein af1432"/>
    <property type="match status" value="1"/>
</dbReference>
<dbReference type="Pfam" id="PF12917">
    <property type="entry name" value="YfbR-like"/>
    <property type="match status" value="1"/>
</dbReference>
<dbReference type="SUPFAM" id="SSF109604">
    <property type="entry name" value="HD-domain/PDEase-like"/>
    <property type="match status" value="1"/>
</dbReference>
<reference key="1">
    <citation type="submission" date="2020-12" db="EMBL/GenBank/DDBJ databases">
        <authorList>
            <person name="Kaminski P.A."/>
        </authorList>
    </citation>
    <scope>NUCLEOTIDE SEQUENCE [LARGE SCALE GENOMIC DNA]</scope>
</reference>
<reference key="2">
    <citation type="journal article" date="2021" name="Science">
        <title>A widespread pathway for substitution of adenine by diaminopurine in phage genomes.</title>
        <authorList>
            <person name="Zhou Y."/>
            <person name="Xu X."/>
            <person name="Wei Y."/>
            <person name="Cheng Y."/>
            <person name="Guo Y."/>
            <person name="Khudyakov I."/>
            <person name="Liu F."/>
            <person name="He P."/>
            <person name="Song Z."/>
            <person name="Li Z."/>
            <person name="Gao Y."/>
            <person name="Ang E.L."/>
            <person name="Zhao H."/>
            <person name="Zhang Y."/>
            <person name="Zhao S."/>
        </authorList>
    </citation>
    <scope>FUNCTION</scope>
    <scope>CATALYTIC ACTIVITY</scope>
    <scope>COFACTOR</scope>
    <scope>SUBUNIT</scope>
</reference>
<reference key="3">
    <citation type="journal article" date="2021" name="Nat. Commun.">
        <title>How cyanophage S-2L rejects adenine and incorporates 2-aminoadenine to saturate hydrogen bonding in its DNA.</title>
        <authorList>
            <person name="Czernecki D."/>
            <person name="Legrand P."/>
            <person name="Tekpinar M."/>
            <person name="Rosario S."/>
            <person name="Kaminski P.A."/>
            <person name="Delarue M."/>
        </authorList>
    </citation>
    <scope>X-RAY CRYSTALLOGRAPHY (0.86 ANGSTROMS)</scope>
    <scope>FUNCTION</scope>
    <scope>CATALYTIC ACTIVITY</scope>
    <scope>COFACTOR</scope>
    <scope>BIOPHYSICOCHEMICAL PROPERTIES</scope>
</reference>
<keyword id="KW-0170">Cobalt</keyword>
<keyword id="KW-0378">Hydrolase</keyword>
<keyword id="KW-0479">Metal-binding</keyword>
<keyword id="KW-0547">Nucleotide-binding</keyword>
<keyword id="KW-1185">Reference proteome</keyword>
<proteinExistence type="evidence at protein level"/>
<organism>
    <name type="scientific">Cyanophage S-2L</name>
    <name type="common">Cyanobacteria phage S-2L</name>
    <dbReference type="NCBI Taxonomy" id="260586"/>
    <lineage>
        <taxon>Viruses</taxon>
        <taxon>Duplodnaviria</taxon>
        <taxon>Heunggongvirae</taxon>
        <taxon>Uroviricota</taxon>
        <taxon>Caudoviricetes</taxon>
    </lineage>
</organism>
<sequence>MTLQITETYERLRASHISRWGIVQTTYPQNIAEHMWRVWLLCRDWGAAAGMPQHTVRQACEFALVHDLAEIRTGDAPTPHKTPELKELLAGIEAQIVPEVAELEATMAPEARELWKFCDTAEAVLFLKVNGLGAHAYDVQHLLMEQMKRRLMDSVLDVEVQDELMFQFERTIKKT</sequence>
<feature type="chain" id="PRO_0000453683" description="dATP triphosphohydrolase">
    <location>
        <begin position="1"/>
        <end position="175"/>
    </location>
</feature>
<feature type="binding site" evidence="1">
    <location>
        <position position="19"/>
    </location>
    <ligand>
        <name>dATP</name>
        <dbReference type="ChEBI" id="CHEBI:61404"/>
    </ligand>
</feature>
<feature type="binding site" evidence="1">
    <location>
        <position position="34"/>
    </location>
    <ligand>
        <name>Co(2+)</name>
        <dbReference type="ChEBI" id="CHEBI:48828"/>
        <label>1</label>
        <note>catalytic</note>
    </ligand>
</feature>
<feature type="binding site" evidence="1">
    <location>
        <position position="66"/>
    </location>
    <ligand>
        <name>Co(2+)</name>
        <dbReference type="ChEBI" id="CHEBI:48828"/>
        <label>1</label>
        <note>catalytic</note>
    </ligand>
</feature>
<feature type="binding site" evidence="1">
    <location>
        <position position="67"/>
    </location>
    <ligand>
        <name>Co(2+)</name>
        <dbReference type="ChEBI" id="CHEBI:48828"/>
        <label>1</label>
        <note>catalytic</note>
    </ligand>
</feature>
<feature type="binding site" evidence="1">
    <location>
        <position position="70"/>
    </location>
    <ligand>
        <name>Co(2+)</name>
        <dbReference type="ChEBI" id="CHEBI:48828"/>
        <label>2</label>
        <note>catalytic</note>
    </ligand>
</feature>
<feature type="binding site" evidence="1">
    <location>
        <position position="75"/>
    </location>
    <ligand>
        <name>Co(2+)</name>
        <dbReference type="ChEBI" id="CHEBI:48828"/>
        <label>2</label>
        <note>catalytic</note>
    </ligand>
</feature>
<feature type="binding site" evidence="1">
    <location>
        <position position="119"/>
    </location>
    <ligand>
        <name>Co(2+)</name>
        <dbReference type="ChEBI" id="CHEBI:48828"/>
        <label>1</label>
        <note>catalytic</note>
    </ligand>
</feature>
<evidence type="ECO:0000269" key="1">
    <source>
    </source>
</evidence>
<evidence type="ECO:0000269" key="2">
    <source>
    </source>
</evidence>
<evidence type="ECO:0000303" key="3">
    <source>
    </source>
</evidence>
<evidence type="ECO:0000303" key="4">
    <source>
    </source>
</evidence>
<evidence type="ECO:0000305" key="5"/>
<evidence type="ECO:0000312" key="6">
    <source>
        <dbReference type="EMBL" id="QQG31317.1"/>
    </source>
</evidence>
<gene>
    <name type="primary">datZ</name>
    <name evidence="6" type="ORF">S2L_22</name>
</gene>
<organismHost>
    <name type="scientific">Synechococcus</name>
    <dbReference type="NCBI Taxonomy" id="1129"/>
</organismHost>